<proteinExistence type="inferred from homology"/>
<name>RL7_BRUMB</name>
<dbReference type="EMBL" id="CP001488">
    <property type="protein sequence ID" value="ACO01020.1"/>
    <property type="molecule type" value="Genomic_DNA"/>
</dbReference>
<dbReference type="RefSeq" id="WP_002964371.1">
    <property type="nucleotide sequence ID" value="NC_012441.1"/>
</dbReference>
<dbReference type="SMR" id="C0RJL2"/>
<dbReference type="GeneID" id="97533516"/>
<dbReference type="KEGG" id="bmi:BMEA_A1289"/>
<dbReference type="HOGENOM" id="CLU_086499_3_0_5"/>
<dbReference type="Proteomes" id="UP000001748">
    <property type="component" value="Chromosome I"/>
</dbReference>
<dbReference type="GO" id="GO:0022625">
    <property type="term" value="C:cytosolic large ribosomal subunit"/>
    <property type="evidence" value="ECO:0007669"/>
    <property type="project" value="TreeGrafter"/>
</dbReference>
<dbReference type="GO" id="GO:0003729">
    <property type="term" value="F:mRNA binding"/>
    <property type="evidence" value="ECO:0007669"/>
    <property type="project" value="TreeGrafter"/>
</dbReference>
<dbReference type="GO" id="GO:0003735">
    <property type="term" value="F:structural constituent of ribosome"/>
    <property type="evidence" value="ECO:0007669"/>
    <property type="project" value="InterPro"/>
</dbReference>
<dbReference type="GO" id="GO:0006412">
    <property type="term" value="P:translation"/>
    <property type="evidence" value="ECO:0007669"/>
    <property type="project" value="UniProtKB-UniRule"/>
</dbReference>
<dbReference type="CDD" id="cd00387">
    <property type="entry name" value="Ribosomal_L7_L12"/>
    <property type="match status" value="1"/>
</dbReference>
<dbReference type="FunFam" id="3.30.1390.10:FF:000001">
    <property type="entry name" value="50S ribosomal protein L7/L12"/>
    <property type="match status" value="1"/>
</dbReference>
<dbReference type="Gene3D" id="3.30.1390.10">
    <property type="match status" value="1"/>
</dbReference>
<dbReference type="Gene3D" id="1.20.5.710">
    <property type="entry name" value="Single helix bin"/>
    <property type="match status" value="1"/>
</dbReference>
<dbReference type="HAMAP" id="MF_00368">
    <property type="entry name" value="Ribosomal_bL12"/>
    <property type="match status" value="1"/>
</dbReference>
<dbReference type="InterPro" id="IPR000206">
    <property type="entry name" value="Ribosomal_bL12"/>
</dbReference>
<dbReference type="InterPro" id="IPR013823">
    <property type="entry name" value="Ribosomal_bL12_C"/>
</dbReference>
<dbReference type="InterPro" id="IPR014719">
    <property type="entry name" value="Ribosomal_bL12_C/ClpS-like"/>
</dbReference>
<dbReference type="InterPro" id="IPR008932">
    <property type="entry name" value="Ribosomal_bL12_oligo"/>
</dbReference>
<dbReference type="InterPro" id="IPR036235">
    <property type="entry name" value="Ribosomal_bL12_oligo_N_sf"/>
</dbReference>
<dbReference type="NCBIfam" id="TIGR00855">
    <property type="entry name" value="L12"/>
    <property type="match status" value="1"/>
</dbReference>
<dbReference type="PANTHER" id="PTHR45987">
    <property type="entry name" value="39S RIBOSOMAL PROTEIN L12"/>
    <property type="match status" value="1"/>
</dbReference>
<dbReference type="PANTHER" id="PTHR45987:SF4">
    <property type="entry name" value="LARGE RIBOSOMAL SUBUNIT PROTEIN BL12M"/>
    <property type="match status" value="1"/>
</dbReference>
<dbReference type="Pfam" id="PF00542">
    <property type="entry name" value="Ribosomal_L12"/>
    <property type="match status" value="1"/>
</dbReference>
<dbReference type="Pfam" id="PF16320">
    <property type="entry name" value="Ribosomal_L12_N"/>
    <property type="match status" value="1"/>
</dbReference>
<dbReference type="SUPFAM" id="SSF54736">
    <property type="entry name" value="ClpS-like"/>
    <property type="match status" value="1"/>
</dbReference>
<dbReference type="SUPFAM" id="SSF48300">
    <property type="entry name" value="Ribosomal protein L7/12, oligomerisation (N-terminal) domain"/>
    <property type="match status" value="1"/>
</dbReference>
<sequence length="124" mass="12546">MADLAKIVEDLSALTVLEAAELSKLLEEKWGVSAAAPVAVAAAGGAAPAAAAEEKTEFDVVLADGGANKINVIKEVRALTGLGLKEAKDLVEGAPKAVKEGASKDEAEKIKAQLEAAGAKVELK</sequence>
<reference key="1">
    <citation type="submission" date="2009-03" db="EMBL/GenBank/DDBJ databases">
        <title>Brucella melitensis ATCC 23457 whole genome shotgun sequencing project.</title>
        <authorList>
            <person name="Setubal J.C."/>
            <person name="Boyle S."/>
            <person name="Crasta O.R."/>
            <person name="Gillespie J.J."/>
            <person name="Kenyon R.W."/>
            <person name="Lu J."/>
            <person name="Mane S."/>
            <person name="Nagrani S."/>
            <person name="Shallom J.M."/>
            <person name="Shallom S."/>
            <person name="Shukla M."/>
            <person name="Snyder E.E."/>
            <person name="Sobral B.W."/>
            <person name="Wattam A.R."/>
            <person name="Will R."/>
            <person name="Williams K."/>
            <person name="Yoo H."/>
            <person name="Munk C."/>
            <person name="Tapia R."/>
            <person name="Han C."/>
            <person name="Detter J.C."/>
            <person name="Bruce D."/>
            <person name="Brettin T.S."/>
        </authorList>
    </citation>
    <scope>NUCLEOTIDE SEQUENCE [LARGE SCALE GENOMIC DNA]</scope>
    <source>
        <strain>ATCC 23457</strain>
    </source>
</reference>
<evidence type="ECO:0000255" key="1">
    <source>
        <dbReference type="HAMAP-Rule" id="MF_00368"/>
    </source>
</evidence>
<evidence type="ECO:0000305" key="2"/>
<feature type="chain" id="PRO_1000195776" description="Large ribosomal subunit protein bL12">
    <location>
        <begin position="1"/>
        <end position="124"/>
    </location>
</feature>
<comment type="function">
    <text evidence="1">Forms part of the ribosomal stalk which helps the ribosome interact with GTP-bound translation factors. Is thus essential for accurate translation.</text>
</comment>
<comment type="subunit">
    <text evidence="1">Homodimer. Part of the ribosomal stalk of the 50S ribosomal subunit. Forms a multimeric L10(L12)X complex, where L10 forms an elongated spine to which 2 to 4 L12 dimers bind in a sequential fashion. Binds GTP-bound translation factors.</text>
</comment>
<comment type="similarity">
    <text evidence="1">Belongs to the bacterial ribosomal protein bL12 family.</text>
</comment>
<keyword id="KW-0687">Ribonucleoprotein</keyword>
<keyword id="KW-0689">Ribosomal protein</keyword>
<accession>C0RJL2</accession>
<gene>
    <name evidence="1" type="primary">rplL</name>
    <name type="ordered locus">BMEA_A1289</name>
</gene>
<organism>
    <name type="scientific">Brucella melitensis biotype 2 (strain ATCC 23457)</name>
    <dbReference type="NCBI Taxonomy" id="546272"/>
    <lineage>
        <taxon>Bacteria</taxon>
        <taxon>Pseudomonadati</taxon>
        <taxon>Pseudomonadota</taxon>
        <taxon>Alphaproteobacteria</taxon>
        <taxon>Hyphomicrobiales</taxon>
        <taxon>Brucellaceae</taxon>
        <taxon>Brucella/Ochrobactrum group</taxon>
        <taxon>Brucella</taxon>
    </lineage>
</organism>
<protein>
    <recommendedName>
        <fullName evidence="1">Large ribosomal subunit protein bL12</fullName>
    </recommendedName>
    <alternativeName>
        <fullName evidence="2">50S ribosomal protein L7/L12</fullName>
    </alternativeName>
</protein>